<reference key="1">
    <citation type="journal article" date="2004" name="Science">
        <title>The Ashbya gossypii genome as a tool for mapping the ancient Saccharomyces cerevisiae genome.</title>
        <authorList>
            <person name="Dietrich F.S."/>
            <person name="Voegeli S."/>
            <person name="Brachat S."/>
            <person name="Lerch A."/>
            <person name="Gates K."/>
            <person name="Steiner S."/>
            <person name="Mohr C."/>
            <person name="Poehlmann R."/>
            <person name="Luedi P."/>
            <person name="Choi S."/>
            <person name="Wing R.A."/>
            <person name="Flavier A."/>
            <person name="Gaffney T.D."/>
            <person name="Philippsen P."/>
        </authorList>
    </citation>
    <scope>NUCLEOTIDE SEQUENCE [LARGE SCALE GENOMIC DNA]</scope>
    <source>
        <strain>ATCC 10895 / CBS 109.51 / FGSC 9923 / NRRL Y-1056</strain>
    </source>
</reference>
<reference key="2">
    <citation type="journal article" date="2013" name="G3 (Bethesda)">
        <title>Genomes of Ashbya fungi isolated from insects reveal four mating-type loci, numerous translocations, lack of transposons, and distinct gene duplications.</title>
        <authorList>
            <person name="Dietrich F.S."/>
            <person name="Voegeli S."/>
            <person name="Kuo S."/>
            <person name="Philippsen P."/>
        </authorList>
    </citation>
    <scope>GENOME REANNOTATION</scope>
    <scope>SEQUENCE REVISION TO 575; 577; 640-641 AND 645-648</scope>
    <source>
        <strain>ATCC 10895 / CBS 109.51 / FGSC 9923 / NRRL Y-1056</strain>
    </source>
</reference>
<sequence length="1292" mass="143575">MAIIKRGVRQKTQPPAKRTTNIKKATFDSGKKKEVGVSDLTLLSKISDEHINENLKRRFENGSIYTYIGHVLISVNPFRDLGIYTDQVLETYKGRNRLEVPPHVFAIAEAMYYNLKAYNENQCVIISGESGAGKTEAAKRIMQYIAAASSSHEASIGRIKDMVLATNPLLESFGCAKTLRNNNSSRHGKYLEIRFNAQFEPCAGQITNYLLEKQRVVGQIKNERNFHIFYQFSKGASDRYRKTYGVQLPEQYVYTSASGCTSVDTIDDLNDYEATLEAMNVIGLSQAEQDEIFRLLSAILWIGNVTFMEDDEGNAKIADTSITDFVAYLLQVDAGLLVKSLVERTIETTHGMRRGSIYNVPLNIVQATAVRDALAKAIYNNLFEWIVDRVNVSLQALPGAEKSIGILDIYGFEIFEHNSFEQICINYVNEKLQQIFIQLTLKSEQEEYAKEQIQWTPIKYFDNKVVCELIEAKRPPGIFAALNDSVATAHADSNAADQAFAQRLNLFTSNPHFELRSSKFVIKHYAGDVTYDIGGMTDKNKDQLQRDLVELLNSTSNTFLATIFPDTGDKDSKRRPPTAGDKIIRSANELVDTLSKAQPSYIRTIKPNQTKSPLDYDDRQVLHQVKYLGLQENVRIRRAGFAYRQTFEKFVERFYLLSPQCSYAGDYTWQGNTLDAVNLILRDTSIPVTEYQLGVTKVFIKTPETLFALENMRDKYWHNMASRIQRAWRRFLQRRIDSAIRIQRAIREMKHGNQFEQLRDYGNKLLGGRKERRAMSLLGYRAFLGDYLSCNELKSKGAFVKRKAGINDHVVFSINGQALHSKFGRSAQRLPKTFILTPSHFYIIGKTLVNNQLTYAVDYKIDVRQIVYVSLTNLQDDWVGIFVSNSTQPDPLINTYFKTELITHLKKLNNRIEIKIGPTIEYQKKPGKIHAVKSQINENAPPLGDIYKSSTIMVRRGRPGNCSQRKKPLSTRLPDTYTTRETGYKNAGHPTNIRQVQEPTHISHSQQHTSSNLGFVYSLNPSAVNHPRPVPSGSVGTTSTPPKQAASAAQAAYNPHKLGGNMDNSSAAYGNASALPNSAPSQAPKPASRPVPKPAPRPGPKPGPKPGPKPGPKPAPKPMPRPAKSVENSVPRPNAIEQGKTAPPPPPPPPPPPAAVPSEPVYEAAFDFPGSGSPNEFPLKKGDRIYVTRQEPSGWSLAKALDGSKEGWVPTAYIVESKAAFSQLEQPVASSAPLGNSGVATREAGTTSAATAAASAATPTAFSAGLADALAARANKMRHEDSGSDDNADDDW</sequence>
<proteinExistence type="inferred from homology"/>
<organism>
    <name type="scientific">Eremothecium gossypii (strain ATCC 10895 / CBS 109.51 / FGSC 9923 / NRRL Y-1056)</name>
    <name type="common">Yeast</name>
    <name type="synonym">Ashbya gossypii</name>
    <dbReference type="NCBI Taxonomy" id="284811"/>
    <lineage>
        <taxon>Eukaryota</taxon>
        <taxon>Fungi</taxon>
        <taxon>Dikarya</taxon>
        <taxon>Ascomycota</taxon>
        <taxon>Saccharomycotina</taxon>
        <taxon>Saccharomycetes</taxon>
        <taxon>Saccharomycetales</taxon>
        <taxon>Saccharomycetaceae</taxon>
        <taxon>Eremothecium</taxon>
    </lineage>
</organism>
<accession>Q758Q9</accession>
<keyword id="KW-0009">Actin-binding</keyword>
<keyword id="KW-0067">ATP-binding</keyword>
<keyword id="KW-0963">Cytoplasm</keyword>
<keyword id="KW-0206">Cytoskeleton</keyword>
<keyword id="KW-0378">Hydrolase</keyword>
<keyword id="KW-0505">Motor protein</keyword>
<keyword id="KW-0518">Myosin</keyword>
<keyword id="KW-0547">Nucleotide-binding</keyword>
<keyword id="KW-0597">Phosphoprotein</keyword>
<keyword id="KW-1185">Reference proteome</keyword>
<keyword id="KW-0677">Repeat</keyword>
<keyword id="KW-0728">SH3 domain</keyword>
<name>MYO1_EREGS</name>
<feature type="chain" id="PRO_0000338535" description="Myosin-1">
    <location>
        <begin position="1"/>
        <end position="1292"/>
    </location>
</feature>
<feature type="domain" description="Myosin motor" evidence="4">
    <location>
        <begin position="35"/>
        <end position="714"/>
    </location>
</feature>
<feature type="domain" description="IQ 1">
    <location>
        <begin position="718"/>
        <end position="738"/>
    </location>
</feature>
<feature type="domain" description="IQ 2">
    <location>
        <begin position="739"/>
        <end position="764"/>
    </location>
</feature>
<feature type="domain" description="TH1" evidence="5">
    <location>
        <begin position="770"/>
        <end position="960"/>
    </location>
</feature>
<feature type="domain" description="SH3" evidence="3">
    <location>
        <begin position="1157"/>
        <end position="1219"/>
    </location>
</feature>
<feature type="region of interest" description="Actin-binding" evidence="1">
    <location>
        <begin position="403"/>
        <end position="485"/>
    </location>
</feature>
<feature type="region of interest" description="Disordered" evidence="6">
    <location>
        <begin position="956"/>
        <end position="991"/>
    </location>
</feature>
<feature type="region of interest" description="Disordered" evidence="6">
    <location>
        <begin position="1017"/>
        <end position="1180"/>
    </location>
</feature>
<feature type="region of interest" description="Disordered" evidence="6">
    <location>
        <begin position="1227"/>
        <end position="1258"/>
    </location>
</feature>
<feature type="compositionally biased region" description="Polar residues" evidence="6">
    <location>
        <begin position="1062"/>
        <end position="1081"/>
    </location>
</feature>
<feature type="compositionally biased region" description="Pro residues" evidence="6">
    <location>
        <begin position="1087"/>
        <end position="1121"/>
    </location>
</feature>
<feature type="compositionally biased region" description="Pro residues" evidence="6">
    <location>
        <begin position="1142"/>
        <end position="1155"/>
    </location>
</feature>
<feature type="compositionally biased region" description="Low complexity" evidence="6">
    <location>
        <begin position="1240"/>
        <end position="1258"/>
    </location>
</feature>
<feature type="binding site" evidence="2">
    <location>
        <begin position="128"/>
        <end position="135"/>
    </location>
    <ligand>
        <name>ATP</name>
        <dbReference type="ChEBI" id="CHEBI:30616"/>
    </ligand>
</feature>
<feature type="modified residue" description="Phosphoserine" evidence="1">
    <location>
        <position position="356"/>
    </location>
</feature>
<protein>
    <recommendedName>
        <fullName>Myosin-1</fullName>
    </recommendedName>
    <alternativeName>
        <fullName>Class I unconventional myosin</fullName>
    </alternativeName>
    <alternativeName>
        <fullName>Type I myosin</fullName>
    </alternativeName>
</protein>
<evidence type="ECO:0000250" key="1"/>
<evidence type="ECO:0000255" key="2"/>
<evidence type="ECO:0000255" key="3">
    <source>
        <dbReference type="PROSITE-ProRule" id="PRU00192"/>
    </source>
</evidence>
<evidence type="ECO:0000255" key="4">
    <source>
        <dbReference type="PROSITE-ProRule" id="PRU00782"/>
    </source>
</evidence>
<evidence type="ECO:0000255" key="5">
    <source>
        <dbReference type="PROSITE-ProRule" id="PRU01093"/>
    </source>
</evidence>
<evidence type="ECO:0000256" key="6">
    <source>
        <dbReference type="SAM" id="MobiDB-lite"/>
    </source>
</evidence>
<evidence type="ECO:0000305" key="7"/>
<gene>
    <name type="primary">MYO1</name>
    <name type="ordered locus">AEL306C</name>
</gene>
<dbReference type="EMBL" id="AE016818">
    <property type="protein sequence ID" value="AAS52378.2"/>
    <property type="molecule type" value="Genomic_DNA"/>
</dbReference>
<dbReference type="RefSeq" id="NP_984554.2">
    <property type="nucleotide sequence ID" value="NM_209907.2"/>
</dbReference>
<dbReference type="SMR" id="Q758Q9"/>
<dbReference type="FunCoup" id="Q758Q9">
    <property type="interactions" value="379"/>
</dbReference>
<dbReference type="STRING" id="284811.Q758Q9"/>
<dbReference type="EnsemblFungi" id="AAS52378">
    <property type="protein sequence ID" value="AAS52378"/>
    <property type="gene ID" value="AGOS_AEL306C"/>
</dbReference>
<dbReference type="GeneID" id="4620729"/>
<dbReference type="KEGG" id="ago:AGOS_AEL306C"/>
<dbReference type="eggNOG" id="KOG0162">
    <property type="taxonomic scope" value="Eukaryota"/>
</dbReference>
<dbReference type="HOGENOM" id="CLU_000192_7_6_1"/>
<dbReference type="InParanoid" id="Q758Q9"/>
<dbReference type="OrthoDB" id="6108017at2759"/>
<dbReference type="Proteomes" id="UP000000591">
    <property type="component" value="Chromosome V"/>
</dbReference>
<dbReference type="GO" id="GO:0030479">
    <property type="term" value="C:actin cortical patch"/>
    <property type="evidence" value="ECO:0000318"/>
    <property type="project" value="GO_Central"/>
</dbReference>
<dbReference type="GO" id="GO:0015629">
    <property type="term" value="C:actin cytoskeleton"/>
    <property type="evidence" value="ECO:0000318"/>
    <property type="project" value="GO_Central"/>
</dbReference>
<dbReference type="GO" id="GO:0051285">
    <property type="term" value="C:cell cortex of cell tip"/>
    <property type="evidence" value="ECO:0007669"/>
    <property type="project" value="EnsemblFungi"/>
</dbReference>
<dbReference type="GO" id="GO:0051286">
    <property type="term" value="C:cell tip"/>
    <property type="evidence" value="ECO:0000318"/>
    <property type="project" value="GO_Central"/>
</dbReference>
<dbReference type="GO" id="GO:0005737">
    <property type="term" value="C:cytoplasm"/>
    <property type="evidence" value="ECO:0000318"/>
    <property type="project" value="GO_Central"/>
</dbReference>
<dbReference type="GO" id="GO:0043332">
    <property type="term" value="C:mating projection tip"/>
    <property type="evidence" value="ECO:0007669"/>
    <property type="project" value="EnsemblFungi"/>
</dbReference>
<dbReference type="GO" id="GO:0031097">
    <property type="term" value="C:medial cortex"/>
    <property type="evidence" value="ECO:0007669"/>
    <property type="project" value="EnsemblFungi"/>
</dbReference>
<dbReference type="GO" id="GO:0045160">
    <property type="term" value="C:myosin I complex"/>
    <property type="evidence" value="ECO:0007669"/>
    <property type="project" value="EnsemblFungi"/>
</dbReference>
<dbReference type="GO" id="GO:0005886">
    <property type="term" value="C:plasma membrane"/>
    <property type="evidence" value="ECO:0000318"/>
    <property type="project" value="GO_Central"/>
</dbReference>
<dbReference type="GO" id="GO:0044853">
    <property type="term" value="C:plasma membrane raft"/>
    <property type="evidence" value="ECO:0007669"/>
    <property type="project" value="EnsemblFungi"/>
</dbReference>
<dbReference type="GO" id="GO:0005628">
    <property type="term" value="C:prospore membrane"/>
    <property type="evidence" value="ECO:0007669"/>
    <property type="project" value="EnsemblFungi"/>
</dbReference>
<dbReference type="GO" id="GO:0051015">
    <property type="term" value="F:actin filament binding"/>
    <property type="evidence" value="ECO:0000318"/>
    <property type="project" value="GO_Central"/>
</dbReference>
<dbReference type="GO" id="GO:0071933">
    <property type="term" value="F:Arp2/3 complex binding"/>
    <property type="evidence" value="ECO:0007669"/>
    <property type="project" value="EnsemblFungi"/>
</dbReference>
<dbReference type="GO" id="GO:0005524">
    <property type="term" value="F:ATP binding"/>
    <property type="evidence" value="ECO:0007669"/>
    <property type="project" value="UniProtKB-KW"/>
</dbReference>
<dbReference type="GO" id="GO:0016787">
    <property type="term" value="F:hydrolase activity"/>
    <property type="evidence" value="ECO:0007669"/>
    <property type="project" value="UniProtKB-KW"/>
</dbReference>
<dbReference type="GO" id="GO:0000146">
    <property type="term" value="F:microfilament motor activity"/>
    <property type="evidence" value="ECO:0000318"/>
    <property type="project" value="GO_Central"/>
</dbReference>
<dbReference type="GO" id="GO:0000147">
    <property type="term" value="P:actin cortical patch assembly"/>
    <property type="evidence" value="ECO:0007669"/>
    <property type="project" value="EnsemblFungi"/>
</dbReference>
<dbReference type="GO" id="GO:0051666">
    <property type="term" value="P:actin cortical patch localization"/>
    <property type="evidence" value="ECO:0000318"/>
    <property type="project" value="GO_Central"/>
</dbReference>
<dbReference type="GO" id="GO:0007015">
    <property type="term" value="P:actin filament organization"/>
    <property type="evidence" value="ECO:0000318"/>
    <property type="project" value="GO_Central"/>
</dbReference>
<dbReference type="GO" id="GO:0006897">
    <property type="term" value="P:endocytosis"/>
    <property type="evidence" value="ECO:0000318"/>
    <property type="project" value="GO_Central"/>
</dbReference>
<dbReference type="GO" id="GO:0000281">
    <property type="term" value="P:mitotic cytokinesis"/>
    <property type="evidence" value="ECO:0007669"/>
    <property type="project" value="EnsemblFungi"/>
</dbReference>
<dbReference type="CDD" id="cd01378">
    <property type="entry name" value="MYSc_Myo1"/>
    <property type="match status" value="1"/>
</dbReference>
<dbReference type="CDD" id="cd11858">
    <property type="entry name" value="SH3_Myosin-I_fungi"/>
    <property type="match status" value="1"/>
</dbReference>
<dbReference type="FunFam" id="1.10.10.820:FF:000001">
    <property type="entry name" value="Myosin heavy chain"/>
    <property type="match status" value="1"/>
</dbReference>
<dbReference type="FunFam" id="1.20.120.720:FF:000015">
    <property type="entry name" value="Myosin I"/>
    <property type="match status" value="1"/>
</dbReference>
<dbReference type="FunFam" id="1.20.5.4820:FF:000004">
    <property type="entry name" value="Myosin IE"/>
    <property type="match status" value="1"/>
</dbReference>
<dbReference type="FunFam" id="1.20.58.530:FF:000007">
    <property type="entry name" value="Myosin IE"/>
    <property type="match status" value="1"/>
</dbReference>
<dbReference type="Gene3D" id="1.10.10.820">
    <property type="match status" value="1"/>
</dbReference>
<dbReference type="Gene3D" id="1.20.5.4820">
    <property type="match status" value="1"/>
</dbReference>
<dbReference type="Gene3D" id="1.20.58.530">
    <property type="match status" value="1"/>
</dbReference>
<dbReference type="Gene3D" id="3.40.850.10">
    <property type="entry name" value="Kinesin motor domain"/>
    <property type="match status" value="1"/>
</dbReference>
<dbReference type="Gene3D" id="1.20.120.720">
    <property type="entry name" value="Myosin VI head, motor domain, U50 subdomain"/>
    <property type="match status" value="1"/>
</dbReference>
<dbReference type="Gene3D" id="2.30.30.40">
    <property type="entry name" value="SH3 Domains"/>
    <property type="match status" value="1"/>
</dbReference>
<dbReference type="InterPro" id="IPR035535">
    <property type="entry name" value="Fungal_myosin-I_SH3"/>
</dbReference>
<dbReference type="InterPro" id="IPR036961">
    <property type="entry name" value="Kinesin_motor_dom_sf"/>
</dbReference>
<dbReference type="InterPro" id="IPR001609">
    <property type="entry name" value="Myosin_head_motor_dom-like"/>
</dbReference>
<dbReference type="InterPro" id="IPR010926">
    <property type="entry name" value="Myosin_TH1"/>
</dbReference>
<dbReference type="InterPro" id="IPR036072">
    <property type="entry name" value="MYSc_Myo1"/>
</dbReference>
<dbReference type="InterPro" id="IPR027417">
    <property type="entry name" value="P-loop_NTPase"/>
</dbReference>
<dbReference type="InterPro" id="IPR036028">
    <property type="entry name" value="SH3-like_dom_sf"/>
</dbReference>
<dbReference type="InterPro" id="IPR001452">
    <property type="entry name" value="SH3_domain"/>
</dbReference>
<dbReference type="PANTHER" id="PTHR13140">
    <property type="entry name" value="MYOSIN"/>
    <property type="match status" value="1"/>
</dbReference>
<dbReference type="PANTHER" id="PTHR13140:SF837">
    <property type="entry name" value="MYOSIN-3-RELATED"/>
    <property type="match status" value="1"/>
</dbReference>
<dbReference type="Pfam" id="PF00063">
    <property type="entry name" value="Myosin_head"/>
    <property type="match status" value="1"/>
</dbReference>
<dbReference type="Pfam" id="PF06017">
    <property type="entry name" value="Myosin_TH1"/>
    <property type="match status" value="1"/>
</dbReference>
<dbReference type="Pfam" id="PF00018">
    <property type="entry name" value="SH3_1"/>
    <property type="match status" value="1"/>
</dbReference>
<dbReference type="PRINTS" id="PR00193">
    <property type="entry name" value="MYOSINHEAVY"/>
</dbReference>
<dbReference type="SMART" id="SM00242">
    <property type="entry name" value="MYSc"/>
    <property type="match status" value="1"/>
</dbReference>
<dbReference type="SMART" id="SM00326">
    <property type="entry name" value="SH3"/>
    <property type="match status" value="1"/>
</dbReference>
<dbReference type="SUPFAM" id="SSF52540">
    <property type="entry name" value="P-loop containing nucleoside triphosphate hydrolases"/>
    <property type="match status" value="1"/>
</dbReference>
<dbReference type="SUPFAM" id="SSF50044">
    <property type="entry name" value="SH3-domain"/>
    <property type="match status" value="1"/>
</dbReference>
<dbReference type="PROSITE" id="PS51456">
    <property type="entry name" value="MYOSIN_MOTOR"/>
    <property type="match status" value="1"/>
</dbReference>
<dbReference type="PROSITE" id="PS50002">
    <property type="entry name" value="SH3"/>
    <property type="match status" value="1"/>
</dbReference>
<dbReference type="PROSITE" id="PS51757">
    <property type="entry name" value="TH1"/>
    <property type="match status" value="1"/>
</dbReference>
<comment type="function">
    <text evidence="1">Type-I myosin implicated in the organization of the actin cytoskeleton. Required for proper actin cytoskeleton polarization. At the cell cortex, assembles in patch-like structures together with proteins from the actin-polymerizing machinery and promotes actin assembly. Functions as actin nucleation-promoting factor (NPF) for the Arp2/3 complex (By similarity).</text>
</comment>
<comment type="subcellular location">
    <subcellularLocation>
        <location evidence="1">Cytoplasm</location>
        <location evidence="1">Cytoskeleton</location>
        <location evidence="1">Actin patch</location>
    </subcellularLocation>
</comment>
<comment type="domain">
    <text evidence="1">The myosin motor domain displays actin-stimulated ATPase activity and generates a mechanochemical force.</text>
</comment>
<comment type="domain">
    <text evidence="1">The tail domain participates in molecular interactions that specify the role of the motor domain (By similarity). It is composed of several tail homology (TH) domains, namely a putative phospholipid-binding myosin tail domain (also named TH1), an Ala- and Pro-rich domain (TH2), followed by an SH3 domain and a C-terminal acidic domain (TH3).</text>
</comment>
<comment type="PTM">
    <text evidence="1">Phosphorylation of the TEDS site (Ser-356) is required for the polarization of the actin cytoskeleton. Phosphorylation probably activates the myosin-I ATPase activity (By similarity).</text>
</comment>
<comment type="similarity">
    <text evidence="7">Belongs to the TRAFAC class myosin-kinesin ATPase superfamily. Myosin family.</text>
</comment>